<proteinExistence type="inferred from homology"/>
<comment type="function">
    <text evidence="1">Catalyzes the reversible formation of acyl-phosphate (acyl-PO(4)) from acyl-[acyl-carrier-protein] (acyl-ACP). This enzyme utilizes acyl-ACP as fatty acyl donor, but not acyl-CoA.</text>
</comment>
<comment type="catalytic activity">
    <reaction evidence="1">
        <text>a fatty acyl-[ACP] + phosphate = an acyl phosphate + holo-[ACP]</text>
        <dbReference type="Rhea" id="RHEA:42292"/>
        <dbReference type="Rhea" id="RHEA-COMP:9685"/>
        <dbReference type="Rhea" id="RHEA-COMP:14125"/>
        <dbReference type="ChEBI" id="CHEBI:43474"/>
        <dbReference type="ChEBI" id="CHEBI:59918"/>
        <dbReference type="ChEBI" id="CHEBI:64479"/>
        <dbReference type="ChEBI" id="CHEBI:138651"/>
        <dbReference type="EC" id="2.3.1.274"/>
    </reaction>
</comment>
<comment type="pathway">
    <text evidence="1">Lipid metabolism; phospholipid metabolism.</text>
</comment>
<comment type="subunit">
    <text evidence="1">Homodimer. Probably interacts with PlsY.</text>
</comment>
<comment type="subcellular location">
    <subcellularLocation>
        <location evidence="1">Cytoplasm</location>
    </subcellularLocation>
    <text evidence="1">Associated with the membrane possibly through PlsY.</text>
</comment>
<comment type="similarity">
    <text evidence="1">Belongs to the PlsX family.</text>
</comment>
<organism>
    <name type="scientific">Mycoplasmopsis pulmonis (strain UAB CTIP)</name>
    <name type="common">Mycoplasma pulmonis</name>
    <dbReference type="NCBI Taxonomy" id="272635"/>
    <lineage>
        <taxon>Bacteria</taxon>
        <taxon>Bacillati</taxon>
        <taxon>Mycoplasmatota</taxon>
        <taxon>Mycoplasmoidales</taxon>
        <taxon>Metamycoplasmataceae</taxon>
        <taxon>Mycoplasmopsis</taxon>
    </lineage>
</organism>
<keyword id="KW-0963">Cytoplasm</keyword>
<keyword id="KW-0444">Lipid biosynthesis</keyword>
<keyword id="KW-0443">Lipid metabolism</keyword>
<keyword id="KW-0594">Phospholipid biosynthesis</keyword>
<keyword id="KW-1208">Phospholipid metabolism</keyword>
<keyword id="KW-1185">Reference proteome</keyword>
<keyword id="KW-0808">Transferase</keyword>
<accession>Q98R48</accession>
<evidence type="ECO:0000255" key="1">
    <source>
        <dbReference type="HAMAP-Rule" id="MF_00019"/>
    </source>
</evidence>
<gene>
    <name evidence="1" type="primary">plsX</name>
    <name type="ordered locus">MYPU_1620</name>
</gene>
<reference key="1">
    <citation type="journal article" date="2001" name="Nucleic Acids Res.">
        <title>The complete genome sequence of the murine respiratory pathogen Mycoplasma pulmonis.</title>
        <authorList>
            <person name="Chambaud I."/>
            <person name="Heilig R."/>
            <person name="Ferris S."/>
            <person name="Barbe V."/>
            <person name="Samson D."/>
            <person name="Galisson F."/>
            <person name="Moszer I."/>
            <person name="Dybvig K."/>
            <person name="Wroblewski H."/>
            <person name="Viari A."/>
            <person name="Rocha E.P.C."/>
            <person name="Blanchard A."/>
        </authorList>
    </citation>
    <scope>NUCLEOTIDE SEQUENCE [LARGE SCALE GENOMIC DNA]</scope>
    <source>
        <strain>UAB CTIP</strain>
    </source>
</reference>
<protein>
    <recommendedName>
        <fullName evidence="1">Phosphate acyltransferase</fullName>
        <ecNumber evidence="1">2.3.1.274</ecNumber>
    </recommendedName>
    <alternativeName>
        <fullName evidence="1">Acyl-ACP phosphotransacylase</fullName>
    </alternativeName>
    <alternativeName>
        <fullName evidence="1">Acyl-[acyl-carrier-protein]--phosphate acyltransferase</fullName>
    </alternativeName>
    <alternativeName>
        <fullName evidence="1">Phosphate-acyl-ACP acyltransferase</fullName>
    </alternativeName>
</protein>
<sequence length="325" mass="35918">MKTIAFDVMGNDFGPQAAVQASLEFVQKNPDFQIILVGDKKEIEKFTKETSQIKILESPNIASSKDGLRQVSKMENSMNSALDLVVEKKADAVLSSGDSGAYLTSALLKVKRLKGILRPAFMPIFPTIVKDKKILVLDVGANLETKVEYLIQWTKLASIFSNKILKVKNPKCALVNIGVEDYKGFDFHKQANEELKQSNANYIGFLEPRNILDGKVDVAVVDGYGGNLILKSMEGAVLALKKVIKESITKTFFRKILALFLKKAFKDAAERLDYRNVGAAWVLGLNGIVVKSHGSNDFKAYLGALEQVKQGINAKVIDVFRETLE</sequence>
<dbReference type="EC" id="2.3.1.274" evidence="1"/>
<dbReference type="EMBL" id="AL445563">
    <property type="protein sequence ID" value="CAC13335.1"/>
    <property type="molecule type" value="Genomic_DNA"/>
</dbReference>
<dbReference type="PIR" id="B90532">
    <property type="entry name" value="B90532"/>
</dbReference>
<dbReference type="RefSeq" id="WP_010924966.1">
    <property type="nucleotide sequence ID" value="NC_002771.1"/>
</dbReference>
<dbReference type="SMR" id="Q98R48"/>
<dbReference type="STRING" id="272635.gene:17576746"/>
<dbReference type="KEGG" id="mpu:MYPU_1620"/>
<dbReference type="eggNOG" id="COG0416">
    <property type="taxonomic scope" value="Bacteria"/>
</dbReference>
<dbReference type="HOGENOM" id="CLU_039379_1_1_14"/>
<dbReference type="BioCyc" id="MPUL272635:G1GT6-163-MONOMER"/>
<dbReference type="UniPathway" id="UPA00085"/>
<dbReference type="Proteomes" id="UP000000528">
    <property type="component" value="Chromosome"/>
</dbReference>
<dbReference type="GO" id="GO:0005737">
    <property type="term" value="C:cytoplasm"/>
    <property type="evidence" value="ECO:0007669"/>
    <property type="project" value="UniProtKB-SubCell"/>
</dbReference>
<dbReference type="GO" id="GO:0043811">
    <property type="term" value="F:phosphate:acyl-[acyl carrier protein] acyltransferase activity"/>
    <property type="evidence" value="ECO:0007669"/>
    <property type="project" value="UniProtKB-UniRule"/>
</dbReference>
<dbReference type="GO" id="GO:0006633">
    <property type="term" value="P:fatty acid biosynthetic process"/>
    <property type="evidence" value="ECO:0007669"/>
    <property type="project" value="UniProtKB-UniRule"/>
</dbReference>
<dbReference type="GO" id="GO:0008654">
    <property type="term" value="P:phospholipid biosynthetic process"/>
    <property type="evidence" value="ECO:0007669"/>
    <property type="project" value="UniProtKB-KW"/>
</dbReference>
<dbReference type="Gene3D" id="3.40.718.10">
    <property type="entry name" value="Isopropylmalate Dehydrogenase"/>
    <property type="match status" value="1"/>
</dbReference>
<dbReference type="HAMAP" id="MF_00019">
    <property type="entry name" value="PlsX"/>
    <property type="match status" value="1"/>
</dbReference>
<dbReference type="InterPro" id="IPR003664">
    <property type="entry name" value="FA_synthesis"/>
</dbReference>
<dbReference type="InterPro" id="IPR012281">
    <property type="entry name" value="Phospholipid_synth_PlsX-like"/>
</dbReference>
<dbReference type="NCBIfam" id="TIGR00182">
    <property type="entry name" value="plsX"/>
    <property type="match status" value="1"/>
</dbReference>
<dbReference type="PANTHER" id="PTHR30100">
    <property type="entry name" value="FATTY ACID/PHOSPHOLIPID SYNTHESIS PROTEIN PLSX"/>
    <property type="match status" value="1"/>
</dbReference>
<dbReference type="PANTHER" id="PTHR30100:SF1">
    <property type="entry name" value="PHOSPHATE ACYLTRANSFERASE"/>
    <property type="match status" value="1"/>
</dbReference>
<dbReference type="Pfam" id="PF02504">
    <property type="entry name" value="FA_synthesis"/>
    <property type="match status" value="1"/>
</dbReference>
<dbReference type="PIRSF" id="PIRSF002465">
    <property type="entry name" value="Phsphlp_syn_PlsX"/>
    <property type="match status" value="1"/>
</dbReference>
<dbReference type="SUPFAM" id="SSF53659">
    <property type="entry name" value="Isocitrate/Isopropylmalate dehydrogenase-like"/>
    <property type="match status" value="1"/>
</dbReference>
<feature type="chain" id="PRO_0000189910" description="Phosphate acyltransferase">
    <location>
        <begin position="1"/>
        <end position="325"/>
    </location>
</feature>
<name>PLSX_MYCPU</name>